<accession>Q5FVE4</accession>
<accession>B3KSF2</accession>
<accession>Q6UWJ3</accession>
<accession>Q7Z5A0</accession>
<accession>Q8WW03</accession>
<accession>Q96M36</accession>
<accession>Q9BYZ3</accession>
<accession>Q9H0C4</accession>
<organism>
    <name type="scientific">Homo sapiens</name>
    <name type="common">Human</name>
    <dbReference type="NCBI Taxonomy" id="9606"/>
    <lineage>
        <taxon>Eukaryota</taxon>
        <taxon>Metazoa</taxon>
        <taxon>Chordata</taxon>
        <taxon>Craniata</taxon>
        <taxon>Vertebrata</taxon>
        <taxon>Euteleostomi</taxon>
        <taxon>Mammalia</taxon>
        <taxon>Eutheria</taxon>
        <taxon>Euarchontoglires</taxon>
        <taxon>Primates</taxon>
        <taxon>Haplorrhini</taxon>
        <taxon>Catarrhini</taxon>
        <taxon>Hominidae</taxon>
        <taxon>Homo</taxon>
    </lineage>
</organism>
<gene>
    <name evidence="13" type="primary">ACSBG2</name>
    <name evidence="11" type="synonym">BGR</name>
    <name type="ORF">UNQ2443/PRO5005</name>
</gene>
<protein>
    <recommendedName>
        <fullName evidence="12">Long-chain-fatty-acid--CoA ligase ACSBG2</fullName>
        <ecNumber evidence="6 7">6.2.1.3</ecNumber>
    </recommendedName>
    <alternativeName>
        <fullName>Acyl-CoA synthetase bubblegum family member 2</fullName>
    </alternativeName>
    <alternativeName>
        <fullName evidence="12">Arachidonate--CoA ligase ACSBG2</fullName>
        <ecNumber evidence="7">6.2.1.15</ecNumber>
    </alternativeName>
    <alternativeName>
        <fullName evidence="11">Bubblegum-related protein</fullName>
    </alternativeName>
    <alternativeName>
        <fullName>PRTD-NY3</fullName>
    </alternativeName>
</protein>
<dbReference type="EC" id="6.2.1.3" evidence="6 7"/>
<dbReference type="EC" id="6.2.1.15" evidence="7"/>
<dbReference type="EMBL" id="AY009107">
    <property type="protein sequence ID" value="AAG49398.1"/>
    <property type="molecule type" value="mRNA"/>
</dbReference>
<dbReference type="EMBL" id="AJ577571">
    <property type="protein sequence ID" value="CAE12156.1"/>
    <property type="molecule type" value="mRNA"/>
</dbReference>
<dbReference type="EMBL" id="AJ577571">
    <property type="protein sequence ID" value="CAE12157.1"/>
    <property type="status" value="ALT_INIT"/>
    <property type="molecule type" value="mRNA"/>
</dbReference>
<dbReference type="EMBL" id="AL136854">
    <property type="protein sequence ID" value="CAB66788.1"/>
    <property type="molecule type" value="mRNA"/>
</dbReference>
<dbReference type="EMBL" id="AY358766">
    <property type="protein sequence ID" value="AAQ89126.1"/>
    <property type="molecule type" value="mRNA"/>
</dbReference>
<dbReference type="EMBL" id="AK057412">
    <property type="protein sequence ID" value="BAB71476.1"/>
    <property type="molecule type" value="mRNA"/>
</dbReference>
<dbReference type="EMBL" id="AK093433">
    <property type="protein sequence ID" value="BAG52714.1"/>
    <property type="molecule type" value="mRNA"/>
</dbReference>
<dbReference type="EMBL" id="CH471139">
    <property type="protein sequence ID" value="EAW69111.1"/>
    <property type="molecule type" value="Genomic_DNA"/>
</dbReference>
<dbReference type="EMBL" id="BC022027">
    <property type="protein sequence ID" value="AAH22027.1"/>
    <property type="molecule type" value="mRNA"/>
</dbReference>
<dbReference type="EMBL" id="BC090046">
    <property type="protein sequence ID" value="AAH90046.1"/>
    <property type="molecule type" value="mRNA"/>
</dbReference>
<dbReference type="CCDS" id="CCDS12159.1">
    <molecule id="Q5FVE4-1"/>
</dbReference>
<dbReference type="CCDS" id="CCDS82282.1">
    <molecule id="Q5FVE4-2"/>
</dbReference>
<dbReference type="RefSeq" id="NP_001276106.1">
    <molecule id="Q5FVE4-1"/>
    <property type="nucleotide sequence ID" value="NM_001289177.2"/>
</dbReference>
<dbReference type="RefSeq" id="NP_001276107.1">
    <molecule id="Q5FVE4-1"/>
    <property type="nucleotide sequence ID" value="NM_001289178.2"/>
</dbReference>
<dbReference type="RefSeq" id="NP_001276108.1">
    <property type="nucleotide sequence ID" value="NM_001289179.1"/>
</dbReference>
<dbReference type="RefSeq" id="NP_001276109.1">
    <molecule id="Q5FVE4-3"/>
    <property type="nucleotide sequence ID" value="NM_001289180.2"/>
</dbReference>
<dbReference type="RefSeq" id="NP_001308313.1">
    <molecule id="Q5FVE4-2"/>
    <property type="nucleotide sequence ID" value="NM_001321384.2"/>
</dbReference>
<dbReference type="RefSeq" id="NP_112186.3">
    <molecule id="Q5FVE4-1"/>
    <property type="nucleotide sequence ID" value="NM_030924.4"/>
</dbReference>
<dbReference type="RefSeq" id="XP_016882821.1">
    <molecule id="Q5FVE4-1"/>
    <property type="nucleotide sequence ID" value="XM_017027332.3"/>
</dbReference>
<dbReference type="RefSeq" id="XP_047295434.1">
    <molecule id="Q5FVE4-3"/>
    <property type="nucleotide sequence ID" value="XM_047439478.1"/>
</dbReference>
<dbReference type="RefSeq" id="XP_054178228.1">
    <molecule id="Q5FVE4-3"/>
    <property type="nucleotide sequence ID" value="XM_054322253.1"/>
</dbReference>
<dbReference type="SMR" id="Q5FVE4"/>
<dbReference type="BioGRID" id="123551">
    <property type="interactions" value="9"/>
</dbReference>
<dbReference type="FunCoup" id="Q5FVE4">
    <property type="interactions" value="425"/>
</dbReference>
<dbReference type="IntAct" id="Q5FVE4">
    <property type="interactions" value="4"/>
</dbReference>
<dbReference type="STRING" id="9606.ENSP00000465589"/>
<dbReference type="SwissLipids" id="SLP:000001212"/>
<dbReference type="GlyGen" id="Q5FVE4">
    <property type="glycosylation" value="1 site, 1 O-linked glycan (1 site)"/>
</dbReference>
<dbReference type="iPTMnet" id="Q5FVE4"/>
<dbReference type="PhosphoSitePlus" id="Q5FVE4"/>
<dbReference type="BioMuta" id="ACSBG2"/>
<dbReference type="DMDM" id="296434386"/>
<dbReference type="MassIVE" id="Q5FVE4"/>
<dbReference type="PaxDb" id="9606-ENSP00000465589"/>
<dbReference type="PeptideAtlas" id="Q5FVE4"/>
<dbReference type="ProteomicsDB" id="62803">
    <molecule id="Q5FVE4-1"/>
</dbReference>
<dbReference type="ProteomicsDB" id="62804">
    <molecule id="Q5FVE4-2"/>
</dbReference>
<dbReference type="ProteomicsDB" id="62805">
    <molecule id="Q5FVE4-3"/>
</dbReference>
<dbReference type="ProteomicsDB" id="62806">
    <molecule id="Q5FVE4-4"/>
</dbReference>
<dbReference type="Antibodypedia" id="24085">
    <property type="antibodies" value="133 antibodies from 22 providers"/>
</dbReference>
<dbReference type="DNASU" id="81616"/>
<dbReference type="Ensembl" id="ENST00000586696.5">
    <molecule id="Q5FVE4-1"/>
    <property type="protein sequence ID" value="ENSP00000465589.1"/>
    <property type="gene ID" value="ENSG00000130377.14"/>
</dbReference>
<dbReference type="Ensembl" id="ENST00000588304.5">
    <molecule id="Q5FVE4-2"/>
    <property type="protein sequence ID" value="ENSP00000464938.1"/>
    <property type="gene ID" value="ENSG00000130377.14"/>
</dbReference>
<dbReference type="Ensembl" id="ENST00000588485.6">
    <molecule id="Q5FVE4-1"/>
    <property type="protein sequence ID" value="ENSP00000466336.2"/>
    <property type="gene ID" value="ENSG00000130377.14"/>
</dbReference>
<dbReference type="Ensembl" id="ENST00000591403.5">
    <molecule id="Q5FVE4-1"/>
    <property type="protein sequence ID" value="ENSP00000467755.1"/>
    <property type="gene ID" value="ENSG00000130377.14"/>
</dbReference>
<dbReference type="GeneID" id="81616"/>
<dbReference type="KEGG" id="hsa:81616"/>
<dbReference type="MANE-Select" id="ENST00000588485.6">
    <property type="protein sequence ID" value="ENSP00000466336.2"/>
    <property type="RefSeq nucleotide sequence ID" value="NM_030924.5"/>
    <property type="RefSeq protein sequence ID" value="NP_112186.3"/>
</dbReference>
<dbReference type="UCSC" id="uc002mee.3">
    <molecule id="Q5FVE4-1"/>
    <property type="organism name" value="human"/>
</dbReference>
<dbReference type="AGR" id="HGNC:24174"/>
<dbReference type="CTD" id="81616"/>
<dbReference type="DisGeNET" id="81616"/>
<dbReference type="GeneCards" id="ACSBG2"/>
<dbReference type="HGNC" id="HGNC:24174">
    <property type="gene designation" value="ACSBG2"/>
</dbReference>
<dbReference type="HPA" id="ENSG00000130377">
    <property type="expression patterns" value="Tissue enriched (testis)"/>
</dbReference>
<dbReference type="MIM" id="614363">
    <property type="type" value="gene"/>
</dbReference>
<dbReference type="neXtProt" id="NX_Q5FVE4"/>
<dbReference type="OpenTargets" id="ENSG00000130377"/>
<dbReference type="PharmGKB" id="PA142672649"/>
<dbReference type="VEuPathDB" id="HostDB:ENSG00000130377"/>
<dbReference type="eggNOG" id="KOG1256">
    <property type="taxonomic scope" value="Eukaryota"/>
</dbReference>
<dbReference type="GeneTree" id="ENSGT00940000155332"/>
<dbReference type="HOGENOM" id="CLU_000022_45_5_1"/>
<dbReference type="InParanoid" id="Q5FVE4"/>
<dbReference type="OMA" id="ETCAYVC"/>
<dbReference type="OrthoDB" id="3633556at2759"/>
<dbReference type="PAN-GO" id="Q5FVE4">
    <property type="GO annotations" value="3 GO annotations based on evolutionary models"/>
</dbReference>
<dbReference type="PhylomeDB" id="Q5FVE4"/>
<dbReference type="BioCyc" id="MetaCyc:HS05377-MONOMER"/>
<dbReference type="BRENDA" id="6.2.1.3">
    <property type="organism ID" value="2681"/>
</dbReference>
<dbReference type="PathwayCommons" id="Q5FVE4"/>
<dbReference type="Reactome" id="R-HSA-75876">
    <property type="pathway name" value="Synthesis of very long-chain fatty acyl-CoAs"/>
</dbReference>
<dbReference type="SignaLink" id="Q5FVE4"/>
<dbReference type="BioGRID-ORCS" id="81616">
    <property type="hits" value="12 hits in 1149 CRISPR screens"/>
</dbReference>
<dbReference type="ChiTaRS" id="ACSBG2">
    <property type="organism name" value="human"/>
</dbReference>
<dbReference type="GeneWiki" id="ACSBG2"/>
<dbReference type="GenomeRNAi" id="81616"/>
<dbReference type="Pharos" id="Q5FVE4">
    <property type="development level" value="Tbio"/>
</dbReference>
<dbReference type="PRO" id="PR:Q5FVE4"/>
<dbReference type="Proteomes" id="UP000005640">
    <property type="component" value="Chromosome 19"/>
</dbReference>
<dbReference type="RNAct" id="Q5FVE4">
    <property type="molecule type" value="protein"/>
</dbReference>
<dbReference type="Bgee" id="ENSG00000130377">
    <property type="expression patterns" value="Expressed in sperm and 109 other cell types or tissues"/>
</dbReference>
<dbReference type="ExpressionAtlas" id="Q5FVE4">
    <property type="expression patterns" value="baseline and differential"/>
</dbReference>
<dbReference type="GO" id="GO:0005737">
    <property type="term" value="C:cytoplasm"/>
    <property type="evidence" value="ECO:0000314"/>
    <property type="project" value="MGI"/>
</dbReference>
<dbReference type="GO" id="GO:0005829">
    <property type="term" value="C:cytosol"/>
    <property type="evidence" value="ECO:0000314"/>
    <property type="project" value="HPA"/>
</dbReference>
<dbReference type="GO" id="GO:0016020">
    <property type="term" value="C:membrane"/>
    <property type="evidence" value="ECO:0007669"/>
    <property type="project" value="UniProtKB-SubCell"/>
</dbReference>
<dbReference type="GO" id="GO:0005739">
    <property type="term" value="C:mitochondrion"/>
    <property type="evidence" value="ECO:0000314"/>
    <property type="project" value="MGI"/>
</dbReference>
<dbReference type="GO" id="GO:0047676">
    <property type="term" value="F:arachidonate-CoA ligase activity"/>
    <property type="evidence" value="ECO:0000314"/>
    <property type="project" value="UniProtKB"/>
</dbReference>
<dbReference type="GO" id="GO:0005524">
    <property type="term" value="F:ATP binding"/>
    <property type="evidence" value="ECO:0007669"/>
    <property type="project" value="UniProtKB-KW"/>
</dbReference>
<dbReference type="GO" id="GO:0047617">
    <property type="term" value="F:fatty acyl-CoA hydrolase activity"/>
    <property type="evidence" value="ECO:0000314"/>
    <property type="project" value="MGI"/>
</dbReference>
<dbReference type="GO" id="GO:0004467">
    <property type="term" value="F:long-chain fatty acid-CoA ligase activity"/>
    <property type="evidence" value="ECO:0000314"/>
    <property type="project" value="UniProtKB"/>
</dbReference>
<dbReference type="GO" id="GO:0031957">
    <property type="term" value="F:very long-chain fatty acid-CoA ligase activity"/>
    <property type="evidence" value="ECO:0000304"/>
    <property type="project" value="Reactome"/>
</dbReference>
<dbReference type="GO" id="GO:0030154">
    <property type="term" value="P:cell differentiation"/>
    <property type="evidence" value="ECO:0007669"/>
    <property type="project" value="UniProtKB-KW"/>
</dbReference>
<dbReference type="GO" id="GO:0006631">
    <property type="term" value="P:fatty acid metabolic process"/>
    <property type="evidence" value="ECO:0000314"/>
    <property type="project" value="MGI"/>
</dbReference>
<dbReference type="GO" id="GO:0042759">
    <property type="term" value="P:long-chain fatty acid biosynthetic process"/>
    <property type="evidence" value="ECO:0000318"/>
    <property type="project" value="GO_Central"/>
</dbReference>
<dbReference type="GO" id="GO:0035338">
    <property type="term" value="P:long-chain fatty-acyl-CoA biosynthetic process"/>
    <property type="evidence" value="ECO:0000304"/>
    <property type="project" value="Reactome"/>
</dbReference>
<dbReference type="GO" id="GO:0007283">
    <property type="term" value="P:spermatogenesis"/>
    <property type="evidence" value="ECO:0007669"/>
    <property type="project" value="UniProtKB-KW"/>
</dbReference>
<dbReference type="CDD" id="cd05933">
    <property type="entry name" value="ACSBG_like"/>
    <property type="match status" value="1"/>
</dbReference>
<dbReference type="Gene3D" id="3.40.50.12780">
    <property type="entry name" value="N-terminal domain of ligase-like"/>
    <property type="match status" value="1"/>
</dbReference>
<dbReference type="InterPro" id="IPR020845">
    <property type="entry name" value="AMP-binding_CS"/>
</dbReference>
<dbReference type="InterPro" id="IPR000873">
    <property type="entry name" value="AMP-dep_synth/lig_dom"/>
</dbReference>
<dbReference type="InterPro" id="IPR042099">
    <property type="entry name" value="ANL_N_sf"/>
</dbReference>
<dbReference type="PANTHER" id="PTHR43272:SF101">
    <property type="entry name" value="ACYL-COA SYNTHETASE BUBBLEGUM FAMILY MEMBER 2-RELATED"/>
    <property type="match status" value="1"/>
</dbReference>
<dbReference type="PANTHER" id="PTHR43272">
    <property type="entry name" value="LONG-CHAIN-FATTY-ACID--COA LIGASE"/>
    <property type="match status" value="1"/>
</dbReference>
<dbReference type="Pfam" id="PF00501">
    <property type="entry name" value="AMP-binding"/>
    <property type="match status" value="1"/>
</dbReference>
<dbReference type="Pfam" id="PF23562">
    <property type="entry name" value="AMP-binding_C_3"/>
    <property type="match status" value="1"/>
</dbReference>
<dbReference type="SUPFAM" id="SSF56801">
    <property type="entry name" value="Acetyl-CoA synthetase-like"/>
    <property type="match status" value="1"/>
</dbReference>
<dbReference type="PROSITE" id="PS00455">
    <property type="entry name" value="AMP_BINDING"/>
    <property type="match status" value="1"/>
</dbReference>
<keyword id="KW-0025">Alternative splicing</keyword>
<keyword id="KW-0067">ATP-binding</keyword>
<keyword id="KW-0963">Cytoplasm</keyword>
<keyword id="KW-0217">Developmental protein</keyword>
<keyword id="KW-0221">Differentiation</keyword>
<keyword id="KW-0276">Fatty acid metabolism</keyword>
<keyword id="KW-0436">Ligase</keyword>
<keyword id="KW-0443">Lipid metabolism</keyword>
<keyword id="KW-0472">Membrane</keyword>
<keyword id="KW-0547">Nucleotide-binding</keyword>
<keyword id="KW-1267">Proteomics identification</keyword>
<keyword id="KW-1185">Reference proteome</keyword>
<keyword id="KW-0744">Spermatogenesis</keyword>
<reference key="1">
    <citation type="journal article" date="2005" name="Asian J. Androl.">
        <title>Identification and characterization of the BGR-like gene with a potential role in human testicular development/spermatogenesis.</title>
        <authorList>
            <person name="Zheng Y."/>
            <person name="Zhou Z.-M."/>
            <person name="Min X."/>
            <person name="Li J.-M."/>
            <person name="Sha J.-H."/>
        </authorList>
    </citation>
    <scope>NUCLEOTIDE SEQUENCE [MRNA] (ISOFORM 3)</scope>
    <scope>TISSUE SPECIFICITY</scope>
    <scope>DEVELOPMENTAL STAGE</scope>
    <scope>VARIANT ALA-143</scope>
    <scope>FUNCTION</scope>
    <source>
        <tissue>Testis</tissue>
    </source>
</reference>
<reference key="2">
    <citation type="journal article" date="2006" name="Arch. Biochem. Biophys.">
        <title>A novel mammalian bubblegum-related acyl-CoA synthetase restricted to testes and possibly involved in spermatogenesis.</title>
        <authorList>
            <person name="Fraisl P."/>
            <person name="Tanaka H."/>
            <person name="Forss-Petter S."/>
            <person name="Lassmann H."/>
            <person name="Nishimune Y."/>
            <person name="Berger J."/>
        </authorList>
    </citation>
    <scope>NUCLEOTIDE SEQUENCE [MRNA] (ISOFORM 1)</scope>
    <scope>SUBCELLULAR LOCATION</scope>
    <scope>TISSUE SPECIFICITY</scope>
    <scope>VARIANT ALA-143</scope>
    <scope>CATALYTIC ACTIVITY</scope>
    <scope>FUNCTION</scope>
    <source>
        <tissue>Testis</tissue>
    </source>
</reference>
<reference key="3">
    <citation type="journal article" date="2001" name="Genome Res.">
        <title>Towards a catalog of human genes and proteins: sequencing and analysis of 500 novel complete protein coding human cDNAs.</title>
        <authorList>
            <person name="Wiemann S."/>
            <person name="Weil B."/>
            <person name="Wellenreuther R."/>
            <person name="Gassenhuber J."/>
            <person name="Glassl S."/>
            <person name="Ansorge W."/>
            <person name="Boecher M."/>
            <person name="Bloecker H."/>
            <person name="Bauersachs S."/>
            <person name="Blum H."/>
            <person name="Lauber J."/>
            <person name="Duesterhoeft A."/>
            <person name="Beyer A."/>
            <person name="Koehrer K."/>
            <person name="Strack N."/>
            <person name="Mewes H.-W."/>
            <person name="Ottenwaelder B."/>
            <person name="Obermaier B."/>
            <person name="Tampe J."/>
            <person name="Heubner D."/>
            <person name="Wambutt R."/>
            <person name="Korn B."/>
            <person name="Klein M."/>
            <person name="Poustka A."/>
        </authorList>
    </citation>
    <scope>NUCLEOTIDE SEQUENCE [LARGE SCALE MRNA] (ISOFORM 1)</scope>
    <scope>VARIANT ALA-143</scope>
    <source>
        <tissue>Testis</tissue>
    </source>
</reference>
<reference key="4">
    <citation type="journal article" date="2003" name="Genome Res.">
        <title>The secreted protein discovery initiative (SPDI), a large-scale effort to identify novel human secreted and transmembrane proteins: a bioinformatics assessment.</title>
        <authorList>
            <person name="Clark H.F."/>
            <person name="Gurney A.L."/>
            <person name="Abaya E."/>
            <person name="Baker K."/>
            <person name="Baldwin D.T."/>
            <person name="Brush J."/>
            <person name="Chen J."/>
            <person name="Chow B."/>
            <person name="Chui C."/>
            <person name="Crowley C."/>
            <person name="Currell B."/>
            <person name="Deuel B."/>
            <person name="Dowd P."/>
            <person name="Eaton D."/>
            <person name="Foster J.S."/>
            <person name="Grimaldi C."/>
            <person name="Gu Q."/>
            <person name="Hass P.E."/>
            <person name="Heldens S."/>
            <person name="Huang A."/>
            <person name="Kim H.S."/>
            <person name="Klimowski L."/>
            <person name="Jin Y."/>
            <person name="Johnson S."/>
            <person name="Lee J."/>
            <person name="Lewis L."/>
            <person name="Liao D."/>
            <person name="Mark M.R."/>
            <person name="Robbie E."/>
            <person name="Sanchez C."/>
            <person name="Schoenfeld J."/>
            <person name="Seshagiri S."/>
            <person name="Simmons L."/>
            <person name="Singh J."/>
            <person name="Smith V."/>
            <person name="Stinson J."/>
            <person name="Vagts A."/>
            <person name="Vandlen R.L."/>
            <person name="Watanabe C."/>
            <person name="Wieand D."/>
            <person name="Woods K."/>
            <person name="Xie M.-H."/>
            <person name="Yansura D.G."/>
            <person name="Yi S."/>
            <person name="Yu G."/>
            <person name="Yuan J."/>
            <person name="Zhang M."/>
            <person name="Zhang Z."/>
            <person name="Goddard A.D."/>
            <person name="Wood W.I."/>
            <person name="Godowski P.J."/>
            <person name="Gray A.M."/>
        </authorList>
    </citation>
    <scope>NUCLEOTIDE SEQUENCE [LARGE SCALE MRNA] (ISOFORM 2)</scope>
    <scope>VARIANT ALA-143</scope>
</reference>
<reference key="5">
    <citation type="journal article" date="2004" name="Nat. Genet.">
        <title>Complete sequencing and characterization of 21,243 full-length human cDNAs.</title>
        <authorList>
            <person name="Ota T."/>
            <person name="Suzuki Y."/>
            <person name="Nishikawa T."/>
            <person name="Otsuki T."/>
            <person name="Sugiyama T."/>
            <person name="Irie R."/>
            <person name="Wakamatsu A."/>
            <person name="Hayashi K."/>
            <person name="Sato H."/>
            <person name="Nagai K."/>
            <person name="Kimura K."/>
            <person name="Makita H."/>
            <person name="Sekine M."/>
            <person name="Obayashi M."/>
            <person name="Nishi T."/>
            <person name="Shibahara T."/>
            <person name="Tanaka T."/>
            <person name="Ishii S."/>
            <person name="Yamamoto J."/>
            <person name="Saito K."/>
            <person name="Kawai Y."/>
            <person name="Isono Y."/>
            <person name="Nakamura Y."/>
            <person name="Nagahari K."/>
            <person name="Murakami K."/>
            <person name="Yasuda T."/>
            <person name="Iwayanagi T."/>
            <person name="Wagatsuma M."/>
            <person name="Shiratori A."/>
            <person name="Sudo H."/>
            <person name="Hosoiri T."/>
            <person name="Kaku Y."/>
            <person name="Kodaira H."/>
            <person name="Kondo H."/>
            <person name="Sugawara M."/>
            <person name="Takahashi M."/>
            <person name="Kanda K."/>
            <person name="Yokoi T."/>
            <person name="Furuya T."/>
            <person name="Kikkawa E."/>
            <person name="Omura Y."/>
            <person name="Abe K."/>
            <person name="Kamihara K."/>
            <person name="Katsuta N."/>
            <person name="Sato K."/>
            <person name="Tanikawa M."/>
            <person name="Yamazaki M."/>
            <person name="Ninomiya K."/>
            <person name="Ishibashi T."/>
            <person name="Yamashita H."/>
            <person name="Murakawa K."/>
            <person name="Fujimori K."/>
            <person name="Tanai H."/>
            <person name="Kimata M."/>
            <person name="Watanabe M."/>
            <person name="Hiraoka S."/>
            <person name="Chiba Y."/>
            <person name="Ishida S."/>
            <person name="Ono Y."/>
            <person name="Takiguchi S."/>
            <person name="Watanabe S."/>
            <person name="Yosida M."/>
            <person name="Hotuta T."/>
            <person name="Kusano J."/>
            <person name="Kanehori K."/>
            <person name="Takahashi-Fujii A."/>
            <person name="Hara H."/>
            <person name="Tanase T.-O."/>
            <person name="Nomura Y."/>
            <person name="Togiya S."/>
            <person name="Komai F."/>
            <person name="Hara R."/>
            <person name="Takeuchi K."/>
            <person name="Arita M."/>
            <person name="Imose N."/>
            <person name="Musashino K."/>
            <person name="Yuuki H."/>
            <person name="Oshima A."/>
            <person name="Sasaki N."/>
            <person name="Aotsuka S."/>
            <person name="Yoshikawa Y."/>
            <person name="Matsunawa H."/>
            <person name="Ichihara T."/>
            <person name="Shiohata N."/>
            <person name="Sano S."/>
            <person name="Moriya S."/>
            <person name="Momiyama H."/>
            <person name="Satoh N."/>
            <person name="Takami S."/>
            <person name="Terashima Y."/>
            <person name="Suzuki O."/>
            <person name="Nakagawa S."/>
            <person name="Senoh A."/>
            <person name="Mizoguchi H."/>
            <person name="Goto Y."/>
            <person name="Shimizu F."/>
            <person name="Wakebe H."/>
            <person name="Hishigaki H."/>
            <person name="Watanabe T."/>
            <person name="Sugiyama A."/>
            <person name="Takemoto M."/>
            <person name="Kawakami B."/>
            <person name="Yamazaki M."/>
            <person name="Watanabe K."/>
            <person name="Kumagai A."/>
            <person name="Itakura S."/>
            <person name="Fukuzumi Y."/>
            <person name="Fujimori Y."/>
            <person name="Komiyama M."/>
            <person name="Tashiro H."/>
            <person name="Tanigami A."/>
            <person name="Fujiwara T."/>
            <person name="Ono T."/>
            <person name="Yamada K."/>
            <person name="Fujii Y."/>
            <person name="Ozaki K."/>
            <person name="Hirao M."/>
            <person name="Ohmori Y."/>
            <person name="Kawabata A."/>
            <person name="Hikiji T."/>
            <person name="Kobatake N."/>
            <person name="Inagaki H."/>
            <person name="Ikema Y."/>
            <person name="Okamoto S."/>
            <person name="Okitani R."/>
            <person name="Kawakami T."/>
            <person name="Noguchi S."/>
            <person name="Itoh T."/>
            <person name="Shigeta K."/>
            <person name="Senba T."/>
            <person name="Matsumura K."/>
            <person name="Nakajima Y."/>
            <person name="Mizuno T."/>
            <person name="Morinaga M."/>
            <person name="Sasaki M."/>
            <person name="Togashi T."/>
            <person name="Oyama M."/>
            <person name="Hata H."/>
            <person name="Watanabe M."/>
            <person name="Komatsu T."/>
            <person name="Mizushima-Sugano J."/>
            <person name="Satoh T."/>
            <person name="Shirai Y."/>
            <person name="Takahashi Y."/>
            <person name="Nakagawa K."/>
            <person name="Okumura K."/>
            <person name="Nagase T."/>
            <person name="Nomura N."/>
            <person name="Kikuchi H."/>
            <person name="Masuho Y."/>
            <person name="Yamashita R."/>
            <person name="Nakai K."/>
            <person name="Yada T."/>
            <person name="Nakamura Y."/>
            <person name="Ohara O."/>
            <person name="Isogai T."/>
            <person name="Sugano S."/>
        </authorList>
    </citation>
    <scope>NUCLEOTIDE SEQUENCE [LARGE SCALE MRNA] (ISOFORMS 1 AND 4)</scope>
    <source>
        <tissue>Testis</tissue>
    </source>
</reference>
<reference key="6">
    <citation type="submission" date="2005-09" db="EMBL/GenBank/DDBJ databases">
        <authorList>
            <person name="Mural R.J."/>
            <person name="Istrail S."/>
            <person name="Sutton G.G."/>
            <person name="Florea L."/>
            <person name="Halpern A.L."/>
            <person name="Mobarry C.M."/>
            <person name="Lippert R."/>
            <person name="Walenz B."/>
            <person name="Shatkay H."/>
            <person name="Dew I."/>
            <person name="Miller J.R."/>
            <person name="Flanigan M.J."/>
            <person name="Edwards N.J."/>
            <person name="Bolanos R."/>
            <person name="Fasulo D."/>
            <person name="Halldorsson B.V."/>
            <person name="Hannenhalli S."/>
            <person name="Turner R."/>
            <person name="Yooseph S."/>
            <person name="Lu F."/>
            <person name="Nusskern D.R."/>
            <person name="Shue B.C."/>
            <person name="Zheng X.H."/>
            <person name="Zhong F."/>
            <person name="Delcher A.L."/>
            <person name="Huson D.H."/>
            <person name="Kravitz S.A."/>
            <person name="Mouchard L."/>
            <person name="Reinert K."/>
            <person name="Remington K.A."/>
            <person name="Clark A.G."/>
            <person name="Waterman M.S."/>
            <person name="Eichler E.E."/>
            <person name="Adams M.D."/>
            <person name="Hunkapiller M.W."/>
            <person name="Myers E.W."/>
            <person name="Venter J.C."/>
        </authorList>
    </citation>
    <scope>NUCLEOTIDE SEQUENCE [LARGE SCALE GENOMIC DNA]</scope>
</reference>
<reference key="7">
    <citation type="journal article" date="2004" name="Genome Res.">
        <title>The status, quality, and expansion of the NIH full-length cDNA project: the Mammalian Gene Collection (MGC).</title>
        <authorList>
            <consortium name="The MGC Project Team"/>
        </authorList>
    </citation>
    <scope>NUCLEOTIDE SEQUENCE [LARGE SCALE MRNA] (ISOFORM 1)</scope>
    <scope>VARIANTS ALA-143; ASP-584; ASP-586; LYS-624 AND GLN-626</scope>
    <source>
        <tissue>Testis</tissue>
    </source>
</reference>
<reference key="8">
    <citation type="journal article" date="2006" name="J. Biol. Chem.">
        <title>The second member of the human and murine 'bubblegum' family is a testis- and brainstem-specific acyl-CoA synthetase.</title>
        <authorList>
            <person name="Pei Z."/>
            <person name="Jia Z."/>
            <person name="Watkins P.A."/>
        </authorList>
    </citation>
    <scope>CATALYTIC ACTIVITY</scope>
    <scope>SUBCELLULAR LOCATION</scope>
    <scope>TISSUE SPECIFICITY</scope>
    <scope>MUTAGENESIS OF HIS-511</scope>
    <scope>FUNCTION</scope>
</reference>
<evidence type="ECO:0000250" key="1"/>
<evidence type="ECO:0000269" key="2">
    <source>
    </source>
</evidence>
<evidence type="ECO:0000269" key="3">
    <source>
    </source>
</evidence>
<evidence type="ECO:0000269" key="4">
    <source>
    </source>
</evidence>
<evidence type="ECO:0000269" key="5">
    <source>
    </source>
</evidence>
<evidence type="ECO:0000269" key="6">
    <source>
    </source>
</evidence>
<evidence type="ECO:0000269" key="7">
    <source>
    </source>
</evidence>
<evidence type="ECO:0000303" key="8">
    <source>
    </source>
</evidence>
<evidence type="ECO:0000303" key="9">
    <source>
    </source>
</evidence>
<evidence type="ECO:0000303" key="10">
    <source>
    </source>
</evidence>
<evidence type="ECO:0000303" key="11">
    <source>
    </source>
</evidence>
<evidence type="ECO:0000305" key="12"/>
<evidence type="ECO:0000312" key="13">
    <source>
        <dbReference type="HGNC" id="HGNC:24174"/>
    </source>
</evidence>
<proteinExistence type="evidence at protein level"/>
<name>ACBG2_HUMAN</name>
<comment type="function">
    <text evidence="5 6 7">Catalyzes the conversion of fatty acids such as long chain and very long-chain fatty acids to their active form acyl-CoAs for both synthesis of cellular lipids, and degradation via beta-oxidation. Can activate diverse saturated, monosaturated and polyunsaturated fatty acids (PubMed:16371355, PubMed:16762313). Has increased ability to activate oleic and linoleic acid (PubMed:16371355). May play a role in spermatogenesis (PubMed:15685348).</text>
</comment>
<comment type="catalytic activity">
    <reaction evidence="6 7">
        <text>a long-chain fatty acid + ATP + CoA = a long-chain fatty acyl-CoA + AMP + diphosphate</text>
        <dbReference type="Rhea" id="RHEA:15421"/>
        <dbReference type="ChEBI" id="CHEBI:30616"/>
        <dbReference type="ChEBI" id="CHEBI:33019"/>
        <dbReference type="ChEBI" id="CHEBI:57287"/>
        <dbReference type="ChEBI" id="CHEBI:57560"/>
        <dbReference type="ChEBI" id="CHEBI:83139"/>
        <dbReference type="ChEBI" id="CHEBI:456215"/>
        <dbReference type="EC" id="6.2.1.3"/>
    </reaction>
    <physiologicalReaction direction="left-to-right" evidence="7">
        <dbReference type="Rhea" id="RHEA:15422"/>
    </physiologicalReaction>
</comment>
<comment type="catalytic activity">
    <reaction evidence="7">
        <text>(5Z,8Z,11Z,14Z)-eicosatetraenoate + ATP + CoA = (5Z,8Z,11Z,14Z)-eicosatetraenoyl-CoA + AMP + diphosphate</text>
        <dbReference type="Rhea" id="RHEA:19713"/>
        <dbReference type="ChEBI" id="CHEBI:30616"/>
        <dbReference type="ChEBI" id="CHEBI:32395"/>
        <dbReference type="ChEBI" id="CHEBI:33019"/>
        <dbReference type="ChEBI" id="CHEBI:57287"/>
        <dbReference type="ChEBI" id="CHEBI:57368"/>
        <dbReference type="ChEBI" id="CHEBI:456215"/>
        <dbReference type="EC" id="6.2.1.15"/>
    </reaction>
    <physiologicalReaction direction="left-to-right" evidence="7">
        <dbReference type="Rhea" id="RHEA:19714"/>
    </physiologicalReaction>
</comment>
<comment type="catalytic activity">
    <reaction evidence="7">
        <text>hexadecanoate + ATP + CoA = hexadecanoyl-CoA + AMP + diphosphate</text>
        <dbReference type="Rhea" id="RHEA:30751"/>
        <dbReference type="ChEBI" id="CHEBI:7896"/>
        <dbReference type="ChEBI" id="CHEBI:30616"/>
        <dbReference type="ChEBI" id="CHEBI:33019"/>
        <dbReference type="ChEBI" id="CHEBI:57287"/>
        <dbReference type="ChEBI" id="CHEBI:57379"/>
        <dbReference type="ChEBI" id="CHEBI:456215"/>
    </reaction>
    <physiologicalReaction direction="left-to-right" evidence="7">
        <dbReference type="Rhea" id="RHEA:30752"/>
    </physiologicalReaction>
</comment>
<comment type="catalytic activity">
    <reaction evidence="7">
        <text>(9Z)-octadecenoate + ATP + CoA = (9Z)-octadecenoyl-CoA + AMP + diphosphate</text>
        <dbReference type="Rhea" id="RHEA:33607"/>
        <dbReference type="ChEBI" id="CHEBI:30616"/>
        <dbReference type="ChEBI" id="CHEBI:30823"/>
        <dbReference type="ChEBI" id="CHEBI:33019"/>
        <dbReference type="ChEBI" id="CHEBI:57287"/>
        <dbReference type="ChEBI" id="CHEBI:57387"/>
        <dbReference type="ChEBI" id="CHEBI:456215"/>
    </reaction>
    <physiologicalReaction direction="left-to-right" evidence="7">
        <dbReference type="Rhea" id="RHEA:33608"/>
    </physiologicalReaction>
</comment>
<comment type="catalytic activity">
    <reaction evidence="7">
        <text>(9Z,12Z)-octadecadienoate + ATP + CoA = (9Z,12Z)-octadecadienoyl-CoA + AMP + diphosphate</text>
        <dbReference type="Rhea" id="RHEA:33651"/>
        <dbReference type="ChEBI" id="CHEBI:30245"/>
        <dbReference type="ChEBI" id="CHEBI:30616"/>
        <dbReference type="ChEBI" id="CHEBI:33019"/>
        <dbReference type="ChEBI" id="CHEBI:57287"/>
        <dbReference type="ChEBI" id="CHEBI:57383"/>
        <dbReference type="ChEBI" id="CHEBI:456215"/>
    </reaction>
    <physiologicalReaction direction="left-to-right" evidence="7">
        <dbReference type="Rhea" id="RHEA:33652"/>
    </physiologicalReaction>
</comment>
<comment type="catalytic activity">
    <reaction evidence="7">
        <text>tetracosanoate + ATP + CoA = tetracosanoyl-CoA + AMP + diphosphate</text>
        <dbReference type="Rhea" id="RHEA:33639"/>
        <dbReference type="ChEBI" id="CHEBI:30616"/>
        <dbReference type="ChEBI" id="CHEBI:31014"/>
        <dbReference type="ChEBI" id="CHEBI:33019"/>
        <dbReference type="ChEBI" id="CHEBI:57287"/>
        <dbReference type="ChEBI" id="CHEBI:65052"/>
        <dbReference type="ChEBI" id="CHEBI:456215"/>
    </reaction>
    <physiologicalReaction direction="left-to-right" evidence="7">
        <dbReference type="Rhea" id="RHEA:33640"/>
    </physiologicalReaction>
</comment>
<comment type="subcellular location">
    <subcellularLocation>
        <location>Cytoplasm</location>
    </subcellularLocation>
    <subcellularLocation>
        <location>Membrane</location>
        <topology>Peripheral membrane protein</topology>
    </subcellularLocation>
</comment>
<comment type="alternative products">
    <event type="alternative splicing"/>
    <isoform>
        <id>Q5FVE4-1</id>
        <name>1</name>
        <sequence type="displayed"/>
    </isoform>
    <isoform>
        <id>Q5FVE4-2</id>
        <name>2</name>
        <sequence type="described" ref="VSP_030719"/>
    </isoform>
    <isoform>
        <id>Q5FVE4-3</id>
        <name>3</name>
        <sequence type="described" ref="VSP_030718"/>
    </isoform>
    <isoform>
        <id>Q5FVE4-4</id>
        <name>4</name>
        <sequence type="described" ref="VSP_030717"/>
    </isoform>
</comment>
<comment type="tissue specificity">
    <text evidence="5 6 7">Testis-specific.</text>
</comment>
<comment type="developmental stage">
    <text evidence="5">Weakly or not expressed in fetal testis. Highly expressed in adult testis and moderately in elderly testis.</text>
</comment>
<comment type="similarity">
    <text evidence="12">Belongs to the ATP-dependent AMP-binding enzyme family. Bubblegum subfamily.</text>
</comment>
<comment type="sequence caution" evidence="12">
    <conflict type="erroneous initiation">
        <sequence resource="EMBL-CDS" id="CAE12157"/>
    </conflict>
    <text>Truncated N-terminus.</text>
</comment>
<sequence>MTGTPKTQEGAKDLEVDMNKTEVTPRLWTTCRDGEVLLRLSKHGPGHETPMTIPEFFRESVNRFGTYPALASKNGKKWEILNFNQYYEACRKAAKSLIKLGLERFHGVGILGFNSAEWFITAVGAILAGGLCVGIYATNSAEVCQYVITHAKVNILLVENDQQLQKILSIPQSSLEPLKAIIQYRLPMKKNNNLYSWDDFMELGRSIPDTQLEQVIESQKANQCAVLIYTSGTTGIPKGVMLSHDNITWIAGAVTKDFKLTDKHETVVSYLPLSHIAAQMMDIWVPIKIGALTYFAQADALKGTLVSTLKEVKPTVFIGVPQIWEKIHEMVKKNSAKSMGLKKKAFVWARNIGFKVNSKKMLGKYNTPVSYRMAKTLVFSKVKTSLGLDHCHSFISGTAPLNQETAEFFLSLDIPIGELYGLSESSGPHTISNQNNYRLLSCGKILTGCKNMLFQQNKDGIGEICLWGRHIFMGYLESETETTEAIDDEGWLHSGDLGQLDGLGFLYVTGHIKEILITAGGENVPPIPVETLVKKKIPIISNAMLVGDKLKFLSMLLTLKCEMNQMSGEPLDKLNFEAINFCRGLGSQASTVTEIVKQQDPLVYKAIQQGINAVNQEAMNNAQRIEKWVILEKDFSIYGGELGPMMKLKRHFVAQKYKKQIDHMYH</sequence>
<feature type="chain" id="PRO_0000315812" description="Long-chain-fatty-acid--CoA ligase ACSBG2">
    <location>
        <begin position="1"/>
        <end position="666"/>
    </location>
</feature>
<feature type="binding site" evidence="1">
    <location>
        <begin position="230"/>
        <end position="238"/>
    </location>
    <ligand>
        <name>ATP</name>
        <dbReference type="ChEBI" id="CHEBI:30616"/>
    </ligand>
</feature>
<feature type="binding site" evidence="1">
    <location>
        <begin position="418"/>
        <end position="423"/>
    </location>
    <ligand>
        <name>ATP</name>
        <dbReference type="ChEBI" id="CHEBI:30616"/>
    </ligand>
</feature>
<feature type="binding site" evidence="1">
    <location>
        <position position="496"/>
    </location>
    <ligand>
        <name>ATP</name>
        <dbReference type="ChEBI" id="CHEBI:30616"/>
    </ligand>
</feature>
<feature type="binding site" evidence="1">
    <location>
        <position position="624"/>
    </location>
    <ligand>
        <name>ATP</name>
        <dbReference type="ChEBI" id="CHEBI:30616"/>
    </ligand>
</feature>
<feature type="splice variant" id="VSP_030717" description="In isoform 4." evidence="9">
    <location>
        <begin position="1"/>
        <end position="200"/>
    </location>
</feature>
<feature type="splice variant" id="VSP_030718" description="In isoform 3." evidence="10">
    <location>
        <begin position="1"/>
        <end position="187"/>
    </location>
</feature>
<feature type="splice variant" id="VSP_030719" description="In isoform 2." evidence="8">
    <location>
        <begin position="1"/>
        <end position="50"/>
    </location>
</feature>
<feature type="sequence variant" id="VAR_038317" description="In dbSNP:rs4807840." evidence="2 3 4 5 7">
    <original>V</original>
    <variation>A</variation>
    <location>
        <position position="143"/>
    </location>
</feature>
<feature type="sequence variant" id="VAR_038318" description="In dbSNP:rs33937754.">
    <original>K</original>
    <variation>R</variation>
    <location>
        <position position="152"/>
    </location>
</feature>
<feature type="sequence variant" id="VAR_038319" description="In dbSNP:rs17851959." evidence="4">
    <original>G</original>
    <variation>D</variation>
    <location>
        <position position="584"/>
    </location>
</feature>
<feature type="sequence variant" id="VAR_038320" description="In dbSNP:rs17851960." evidence="4">
    <original>G</original>
    <variation>D</variation>
    <location>
        <position position="586"/>
    </location>
</feature>
<feature type="sequence variant" id="VAR_038321" description="In dbSNP:rs35609668.">
    <original>P</original>
    <variation>R</variation>
    <location>
        <position position="601"/>
    </location>
</feature>
<feature type="sequence variant" id="VAR_038322" description="In dbSNP:rs17856650." evidence="4">
    <original>R</original>
    <variation>K</variation>
    <location>
        <position position="624"/>
    </location>
</feature>
<feature type="sequence variant" id="VAR_038323" description="In dbSNP:rs17856651." evidence="4">
    <original>E</original>
    <variation>Q</variation>
    <location>
        <position position="626"/>
    </location>
</feature>
<feature type="sequence variant" id="VAR_038324" description="In dbSNP:rs35605352.">
    <original>R</original>
    <variation>S</variation>
    <location>
        <position position="650"/>
    </location>
</feature>
<feature type="mutagenesis site" description="Results in a shift of the pH optimum to a more acidic pH without affecting substrate specificity." evidence="6">
    <original>H</original>
    <variation>R</variation>
    <location>
        <position position="511"/>
    </location>
</feature>
<feature type="sequence conflict" description="In Ref. 4; AAQ89126." evidence="12" ref="4">
    <original>A</original>
    <variation>P</variation>
    <location>
        <position position="71"/>
    </location>
</feature>
<feature type="sequence conflict" description="In Ref. 1; AAG49398." evidence="12" ref="1">
    <original>K</original>
    <variation>E</variation>
    <location>
        <position position="332"/>
    </location>
</feature>
<feature type="sequence conflict" description="In Ref. 2; CAE12156/CAE12157 and 3; CAB66788." evidence="12" ref="2 3">
    <original>I</original>
    <variation>M</variation>
    <location>
        <position position="595"/>
    </location>
</feature>